<accession>P07349</accession>
<name>IFNA5_MOUSE</name>
<dbReference type="EMBL" id="X01971">
    <property type="protein sequence ID" value="CAA26003.1"/>
    <property type="status" value="ALT_SEQ"/>
    <property type="molecule type" value="Genomic_DNA"/>
</dbReference>
<dbReference type="CCDS" id="CCDS18345.1"/>
<dbReference type="PIR" id="C23087">
    <property type="entry name" value="IVMSA5"/>
</dbReference>
<dbReference type="PDB" id="3OQ3">
    <property type="method" value="X-ray"/>
    <property type="resolution" value="2.10 A"/>
    <property type="chains" value="A=24-189"/>
</dbReference>
<dbReference type="PDBsum" id="3OQ3"/>
<dbReference type="SMR" id="P07349"/>
<dbReference type="FunCoup" id="P07349">
    <property type="interactions" value="533"/>
</dbReference>
<dbReference type="STRING" id="10090.ENSMUSP00000099868"/>
<dbReference type="GlyCosmos" id="P07349">
    <property type="glycosylation" value="1 site, No reported glycans"/>
</dbReference>
<dbReference type="GlyGen" id="P07349">
    <property type="glycosylation" value="1 site"/>
</dbReference>
<dbReference type="PaxDb" id="10090-ENSMUSP00000099868"/>
<dbReference type="ABCD" id="P07349">
    <property type="antibodies" value="1 sequenced antibody"/>
</dbReference>
<dbReference type="AGR" id="MGI:107663"/>
<dbReference type="MGI" id="MGI:107663">
    <property type="gene designation" value="Ifna5"/>
</dbReference>
<dbReference type="eggNOG" id="ENOG502SQAC">
    <property type="taxonomic scope" value="Eukaryota"/>
</dbReference>
<dbReference type="InParanoid" id="P07349"/>
<dbReference type="PhylomeDB" id="P07349"/>
<dbReference type="Reactome" id="R-MMU-909733">
    <property type="pathway name" value="Interferon alpha/beta signaling"/>
</dbReference>
<dbReference type="Reactome" id="R-MMU-912694">
    <property type="pathway name" value="Regulation of IFNA/IFNB signaling"/>
</dbReference>
<dbReference type="EvolutionaryTrace" id="P07349"/>
<dbReference type="PRO" id="PR:P07349"/>
<dbReference type="Proteomes" id="UP000000589">
    <property type="component" value="Unplaced"/>
</dbReference>
<dbReference type="RNAct" id="P07349">
    <property type="molecule type" value="protein"/>
</dbReference>
<dbReference type="GO" id="GO:0005615">
    <property type="term" value="C:extracellular space"/>
    <property type="evidence" value="ECO:0007669"/>
    <property type="project" value="UniProtKB-KW"/>
</dbReference>
<dbReference type="GO" id="GO:0005125">
    <property type="term" value="F:cytokine activity"/>
    <property type="evidence" value="ECO:0007669"/>
    <property type="project" value="UniProtKB-KW"/>
</dbReference>
<dbReference type="GO" id="GO:0005126">
    <property type="term" value="F:cytokine receptor binding"/>
    <property type="evidence" value="ECO:0007669"/>
    <property type="project" value="InterPro"/>
</dbReference>
<dbReference type="GO" id="GO:0051607">
    <property type="term" value="P:defense response to virus"/>
    <property type="evidence" value="ECO:0007669"/>
    <property type="project" value="UniProtKB-KW"/>
</dbReference>
<dbReference type="CDD" id="cd00095">
    <property type="entry name" value="IFab"/>
    <property type="match status" value="1"/>
</dbReference>
<dbReference type="FunFam" id="1.20.1250.10:FF:000001">
    <property type="entry name" value="Interferon alpha"/>
    <property type="match status" value="1"/>
</dbReference>
<dbReference type="Gene3D" id="1.20.1250.10">
    <property type="match status" value="1"/>
</dbReference>
<dbReference type="InterPro" id="IPR009079">
    <property type="entry name" value="4_helix_cytokine-like_core"/>
</dbReference>
<dbReference type="InterPro" id="IPR000471">
    <property type="entry name" value="Interferon_alpha/beta/delta"/>
</dbReference>
<dbReference type="PANTHER" id="PTHR11691:SF74">
    <property type="entry name" value="ALPHA-INTERFERON-RELATED"/>
    <property type="match status" value="1"/>
</dbReference>
<dbReference type="PANTHER" id="PTHR11691">
    <property type="entry name" value="TYPE I INTERFERON"/>
    <property type="match status" value="1"/>
</dbReference>
<dbReference type="Pfam" id="PF00143">
    <property type="entry name" value="Interferon"/>
    <property type="match status" value="1"/>
</dbReference>
<dbReference type="PRINTS" id="PR00266">
    <property type="entry name" value="INTERFERONAB"/>
</dbReference>
<dbReference type="SMART" id="SM00076">
    <property type="entry name" value="IFabd"/>
    <property type="match status" value="1"/>
</dbReference>
<dbReference type="SUPFAM" id="SSF47266">
    <property type="entry name" value="4-helical cytokines"/>
    <property type="match status" value="1"/>
</dbReference>
<dbReference type="PROSITE" id="PS00252">
    <property type="entry name" value="INTERFERON_A_B_D"/>
    <property type="match status" value="1"/>
</dbReference>
<keyword id="KW-0002">3D-structure</keyword>
<keyword id="KW-0051">Antiviral defense</keyword>
<keyword id="KW-0202">Cytokine</keyword>
<keyword id="KW-1015">Disulfide bond</keyword>
<keyword id="KW-0325">Glycoprotein</keyword>
<keyword id="KW-1185">Reference proteome</keyword>
<keyword id="KW-0964">Secreted</keyword>
<keyword id="KW-0732">Signal</keyword>
<evidence type="ECO:0000250" key="1"/>
<evidence type="ECO:0000305" key="2"/>
<evidence type="ECO:0007829" key="3">
    <source>
        <dbReference type="PDB" id="3OQ3"/>
    </source>
</evidence>
<feature type="signal peptide" evidence="1">
    <location>
        <begin position="1"/>
        <end position="23"/>
    </location>
</feature>
<feature type="chain" id="PRO_0000016378" description="Interferon alpha-5">
    <location>
        <begin position="24"/>
        <end position="189"/>
    </location>
</feature>
<feature type="glycosylation site" description="N-linked (GlcNAc...) asparagine" evidence="2">
    <location>
        <position position="101"/>
    </location>
</feature>
<feature type="disulfide bond" evidence="1">
    <location>
        <begin position="24"/>
        <end position="122"/>
    </location>
</feature>
<feature type="disulfide bond" evidence="1">
    <location>
        <begin position="52"/>
        <end position="162"/>
    </location>
</feature>
<feature type="helix" evidence="3">
    <location>
        <begin position="32"/>
        <end position="44"/>
    </location>
</feature>
<feature type="helix" evidence="3">
    <location>
        <begin position="49"/>
        <end position="51"/>
    </location>
</feature>
<feature type="helix" evidence="3">
    <location>
        <begin position="53"/>
        <end position="55"/>
    </location>
</feature>
<feature type="turn" evidence="3">
    <location>
        <begin position="68"/>
        <end position="70"/>
    </location>
</feature>
<feature type="helix" evidence="3">
    <location>
        <begin position="73"/>
        <end position="91"/>
    </location>
</feature>
<feature type="helix" evidence="3">
    <location>
        <begin position="94"/>
        <end position="99"/>
    </location>
</feature>
<feature type="helix" evidence="3">
    <location>
        <begin position="102"/>
        <end position="125"/>
    </location>
</feature>
<feature type="helix" evidence="3">
    <location>
        <begin position="133"/>
        <end position="156"/>
    </location>
</feature>
<feature type="turn" evidence="3">
    <location>
        <begin position="157"/>
        <end position="159"/>
    </location>
</feature>
<feature type="helix" evidence="3">
    <location>
        <begin position="161"/>
        <end position="187"/>
    </location>
</feature>
<protein>
    <recommendedName>
        <fullName>Interferon alpha-5</fullName>
        <shortName>IFN-alpha-5</shortName>
    </recommendedName>
</protein>
<reference key="1">
    <citation type="journal article" date="1985" name="Nucleic Acids Res.">
        <title>Characterization of a mouse interferon gene locus I. Isolation of a cluster of four alpha interferon genes.</title>
        <authorList>
            <person name="Kelly K.A."/>
            <person name="Pitha P.M."/>
        </authorList>
    </citation>
    <scope>NUCLEOTIDE SEQUENCE [GENOMIC DNA]</scope>
</reference>
<proteinExistence type="evidence at protein level"/>
<organism>
    <name type="scientific">Mus musculus</name>
    <name type="common">Mouse</name>
    <dbReference type="NCBI Taxonomy" id="10090"/>
    <lineage>
        <taxon>Eukaryota</taxon>
        <taxon>Metazoa</taxon>
        <taxon>Chordata</taxon>
        <taxon>Craniata</taxon>
        <taxon>Vertebrata</taxon>
        <taxon>Euteleostomi</taxon>
        <taxon>Mammalia</taxon>
        <taxon>Eutheria</taxon>
        <taxon>Euarchontoglires</taxon>
        <taxon>Glires</taxon>
        <taxon>Rodentia</taxon>
        <taxon>Myomorpha</taxon>
        <taxon>Muroidea</taxon>
        <taxon>Muridae</taxon>
        <taxon>Murinae</taxon>
        <taxon>Mus</taxon>
        <taxon>Mus</taxon>
    </lineage>
</organism>
<sequence length="189" mass="21514">MARLCAFLMVLPVLSYWPTCSLGCDLPQTHNLRNKRALTLLVKMRRLSPLSCLKDRKDFGFPQEKVGAQQIQEAQAIPVLSELTQQVLNIFTSKDSSAAWNATLLDSFCNEVHQQLNDLKACVMQQVGVQESPLTQEDSLLAVRKYFHRITVYLREKKHSPCAWEVVRAEVWRALSSSVNLLARLSKEE</sequence>
<gene>
    <name type="primary">Ifna5</name>
</gene>
<comment type="function">
    <text>Produced by macrophages, IFN-alpha have antiviral activities. Interferon stimulates the production of two enzymes: a protein kinase and an oligoadenylate synthetase.</text>
</comment>
<comment type="subcellular location">
    <subcellularLocation>
        <location>Secreted</location>
    </subcellularLocation>
</comment>
<comment type="similarity">
    <text evidence="2">Belongs to the alpha/beta interferon family.</text>
</comment>